<feature type="chain" id="PRO_1000136788" description="Ribosome maturation factor RimP">
    <location>
        <begin position="1"/>
        <end position="152"/>
    </location>
</feature>
<sequence>MGLSTLEQKLTAMVSAPVEALGFEFVGLEFIRGRVSTLRIYIDSEEGITVDDCADVSHQVSAVLDVEDPIQTFYNLEISSPGLERPLFTTTHYEQFIGEEVAVVLRIAMQNRRKWQGIIKSVAGEMITVTVDGKDEVFALSNIQKANLVPHF</sequence>
<organism>
    <name type="scientific">Proteus mirabilis (strain HI4320)</name>
    <dbReference type="NCBI Taxonomy" id="529507"/>
    <lineage>
        <taxon>Bacteria</taxon>
        <taxon>Pseudomonadati</taxon>
        <taxon>Pseudomonadota</taxon>
        <taxon>Gammaproteobacteria</taxon>
        <taxon>Enterobacterales</taxon>
        <taxon>Morganellaceae</taxon>
        <taxon>Proteus</taxon>
    </lineage>
</organism>
<dbReference type="EMBL" id="AM942759">
    <property type="protein sequence ID" value="CAR46695.1"/>
    <property type="molecule type" value="Genomic_DNA"/>
</dbReference>
<dbReference type="SMR" id="B4F2B7"/>
<dbReference type="EnsemblBacteria" id="CAR46695">
    <property type="protein sequence ID" value="CAR46695"/>
    <property type="gene ID" value="PMI3416"/>
</dbReference>
<dbReference type="KEGG" id="pmr:PMI3416"/>
<dbReference type="eggNOG" id="COG0779">
    <property type="taxonomic scope" value="Bacteria"/>
</dbReference>
<dbReference type="HOGENOM" id="CLU_070525_1_1_6"/>
<dbReference type="Proteomes" id="UP000008319">
    <property type="component" value="Chromosome"/>
</dbReference>
<dbReference type="GO" id="GO:0005829">
    <property type="term" value="C:cytosol"/>
    <property type="evidence" value="ECO:0007669"/>
    <property type="project" value="TreeGrafter"/>
</dbReference>
<dbReference type="GO" id="GO:0000028">
    <property type="term" value="P:ribosomal small subunit assembly"/>
    <property type="evidence" value="ECO:0007669"/>
    <property type="project" value="TreeGrafter"/>
</dbReference>
<dbReference type="GO" id="GO:0006412">
    <property type="term" value="P:translation"/>
    <property type="evidence" value="ECO:0007669"/>
    <property type="project" value="TreeGrafter"/>
</dbReference>
<dbReference type="CDD" id="cd01734">
    <property type="entry name" value="YlxS_C"/>
    <property type="match status" value="1"/>
</dbReference>
<dbReference type="FunFam" id="2.30.30.180:FF:000001">
    <property type="entry name" value="Ribosome maturation factor RimP"/>
    <property type="match status" value="1"/>
</dbReference>
<dbReference type="FunFam" id="3.30.300.70:FF:000001">
    <property type="entry name" value="Ribosome maturation factor RimP"/>
    <property type="match status" value="1"/>
</dbReference>
<dbReference type="Gene3D" id="2.30.30.180">
    <property type="entry name" value="Ribosome maturation factor RimP, C-terminal domain"/>
    <property type="match status" value="1"/>
</dbReference>
<dbReference type="Gene3D" id="3.30.300.70">
    <property type="entry name" value="RimP-like superfamily, N-terminal"/>
    <property type="match status" value="1"/>
</dbReference>
<dbReference type="HAMAP" id="MF_01077">
    <property type="entry name" value="RimP"/>
    <property type="match status" value="1"/>
</dbReference>
<dbReference type="InterPro" id="IPR003728">
    <property type="entry name" value="Ribosome_maturation_RimP"/>
</dbReference>
<dbReference type="InterPro" id="IPR028998">
    <property type="entry name" value="RimP_C"/>
</dbReference>
<dbReference type="InterPro" id="IPR036847">
    <property type="entry name" value="RimP_C_sf"/>
</dbReference>
<dbReference type="InterPro" id="IPR028989">
    <property type="entry name" value="RimP_N"/>
</dbReference>
<dbReference type="InterPro" id="IPR035956">
    <property type="entry name" value="RimP_N_sf"/>
</dbReference>
<dbReference type="NCBIfam" id="NF000927">
    <property type="entry name" value="PRK00092.1-1"/>
    <property type="match status" value="1"/>
</dbReference>
<dbReference type="PANTHER" id="PTHR33867">
    <property type="entry name" value="RIBOSOME MATURATION FACTOR RIMP"/>
    <property type="match status" value="1"/>
</dbReference>
<dbReference type="PANTHER" id="PTHR33867:SF1">
    <property type="entry name" value="RIBOSOME MATURATION FACTOR RIMP"/>
    <property type="match status" value="1"/>
</dbReference>
<dbReference type="Pfam" id="PF17384">
    <property type="entry name" value="DUF150_C"/>
    <property type="match status" value="1"/>
</dbReference>
<dbReference type="Pfam" id="PF02576">
    <property type="entry name" value="RimP_N"/>
    <property type="match status" value="1"/>
</dbReference>
<dbReference type="SUPFAM" id="SSF74942">
    <property type="entry name" value="YhbC-like, C-terminal domain"/>
    <property type="match status" value="1"/>
</dbReference>
<dbReference type="SUPFAM" id="SSF75420">
    <property type="entry name" value="YhbC-like, N-terminal domain"/>
    <property type="match status" value="1"/>
</dbReference>
<name>RIMP_PROMH</name>
<gene>
    <name evidence="1" type="primary">rimP</name>
    <name type="ordered locus">PMI3416</name>
</gene>
<reference key="1">
    <citation type="journal article" date="2008" name="J. Bacteriol.">
        <title>Complete genome sequence of uropathogenic Proteus mirabilis, a master of both adherence and motility.</title>
        <authorList>
            <person name="Pearson M.M."/>
            <person name="Sebaihia M."/>
            <person name="Churcher C."/>
            <person name="Quail M.A."/>
            <person name="Seshasayee A.S."/>
            <person name="Luscombe N.M."/>
            <person name="Abdellah Z."/>
            <person name="Arrosmith C."/>
            <person name="Atkin B."/>
            <person name="Chillingworth T."/>
            <person name="Hauser H."/>
            <person name="Jagels K."/>
            <person name="Moule S."/>
            <person name="Mungall K."/>
            <person name="Norbertczak H."/>
            <person name="Rabbinowitsch E."/>
            <person name="Walker D."/>
            <person name="Whithead S."/>
            <person name="Thomson N.R."/>
            <person name="Rather P.N."/>
            <person name="Parkhill J."/>
            <person name="Mobley H.L.T."/>
        </authorList>
    </citation>
    <scope>NUCLEOTIDE SEQUENCE [LARGE SCALE GENOMIC DNA]</scope>
    <source>
        <strain>HI4320</strain>
    </source>
</reference>
<accession>B4F2B7</accession>
<proteinExistence type="inferred from homology"/>
<evidence type="ECO:0000255" key="1">
    <source>
        <dbReference type="HAMAP-Rule" id="MF_01077"/>
    </source>
</evidence>
<comment type="function">
    <text evidence="1">Required for maturation of 30S ribosomal subunits.</text>
</comment>
<comment type="subcellular location">
    <subcellularLocation>
        <location evidence="1">Cytoplasm</location>
    </subcellularLocation>
</comment>
<comment type="similarity">
    <text evidence="1">Belongs to the RimP family.</text>
</comment>
<protein>
    <recommendedName>
        <fullName evidence="1">Ribosome maturation factor RimP</fullName>
    </recommendedName>
</protein>
<keyword id="KW-0963">Cytoplasm</keyword>
<keyword id="KW-1185">Reference proteome</keyword>
<keyword id="KW-0690">Ribosome biogenesis</keyword>